<keyword id="KW-0028">Amino-acid biosynthesis</keyword>
<keyword id="KW-0057">Aromatic amino acid biosynthesis</keyword>
<keyword id="KW-0456">Lyase</keyword>
<keyword id="KW-1185">Reference proteome</keyword>
<protein>
    <recommendedName>
        <fullName evidence="1">3-dehydroquinate dehydratase</fullName>
        <shortName evidence="1">3-dehydroquinase</shortName>
        <ecNumber evidence="1">4.2.1.10</ecNumber>
    </recommendedName>
    <alternativeName>
        <fullName evidence="1">Type II DHQase</fullName>
    </alternativeName>
</protein>
<proteinExistence type="inferred from homology"/>
<comment type="function">
    <text evidence="1">Catalyzes a trans-dehydration via an enolate intermediate.</text>
</comment>
<comment type="catalytic activity">
    <reaction evidence="1">
        <text>3-dehydroquinate = 3-dehydroshikimate + H2O</text>
        <dbReference type="Rhea" id="RHEA:21096"/>
        <dbReference type="ChEBI" id="CHEBI:15377"/>
        <dbReference type="ChEBI" id="CHEBI:16630"/>
        <dbReference type="ChEBI" id="CHEBI:32364"/>
        <dbReference type="EC" id="4.2.1.10"/>
    </reaction>
</comment>
<comment type="pathway">
    <text evidence="1">Metabolic intermediate biosynthesis; chorismate biosynthesis; chorismate from D-erythrose 4-phosphate and phosphoenolpyruvate: step 3/7.</text>
</comment>
<comment type="subunit">
    <text evidence="1">Homododecamer.</text>
</comment>
<comment type="similarity">
    <text evidence="1">Belongs to the type-II 3-dehydroquinase family.</text>
</comment>
<dbReference type="EC" id="4.2.1.10" evidence="1"/>
<dbReference type="EMBL" id="CP000002">
    <property type="protein sequence ID" value="AAU24133.1"/>
    <property type="molecule type" value="Genomic_DNA"/>
</dbReference>
<dbReference type="EMBL" id="AE017333">
    <property type="protein sequence ID" value="AAU41492.1"/>
    <property type="molecule type" value="Genomic_DNA"/>
</dbReference>
<dbReference type="RefSeq" id="WP_003183415.1">
    <property type="nucleotide sequence ID" value="NC_006322.1"/>
</dbReference>
<dbReference type="SMR" id="Q65HH2"/>
<dbReference type="STRING" id="279010.BL01544"/>
<dbReference type="GeneID" id="92860787"/>
<dbReference type="KEGG" id="bld:BLi02618"/>
<dbReference type="KEGG" id="bli:BL01544"/>
<dbReference type="eggNOG" id="COG0757">
    <property type="taxonomic scope" value="Bacteria"/>
</dbReference>
<dbReference type="HOGENOM" id="CLU_090968_2_1_9"/>
<dbReference type="UniPathway" id="UPA00053">
    <property type="reaction ID" value="UER00086"/>
</dbReference>
<dbReference type="Proteomes" id="UP000000606">
    <property type="component" value="Chromosome"/>
</dbReference>
<dbReference type="GO" id="GO:0003855">
    <property type="term" value="F:3-dehydroquinate dehydratase activity"/>
    <property type="evidence" value="ECO:0007669"/>
    <property type="project" value="UniProtKB-UniRule"/>
</dbReference>
<dbReference type="GO" id="GO:0008652">
    <property type="term" value="P:amino acid biosynthetic process"/>
    <property type="evidence" value="ECO:0007669"/>
    <property type="project" value="UniProtKB-KW"/>
</dbReference>
<dbReference type="GO" id="GO:0009073">
    <property type="term" value="P:aromatic amino acid family biosynthetic process"/>
    <property type="evidence" value="ECO:0007669"/>
    <property type="project" value="UniProtKB-KW"/>
</dbReference>
<dbReference type="GO" id="GO:0009423">
    <property type="term" value="P:chorismate biosynthetic process"/>
    <property type="evidence" value="ECO:0007669"/>
    <property type="project" value="UniProtKB-UniRule"/>
</dbReference>
<dbReference type="GO" id="GO:0019631">
    <property type="term" value="P:quinate catabolic process"/>
    <property type="evidence" value="ECO:0007669"/>
    <property type="project" value="TreeGrafter"/>
</dbReference>
<dbReference type="CDD" id="cd00466">
    <property type="entry name" value="DHQase_II"/>
    <property type="match status" value="1"/>
</dbReference>
<dbReference type="Gene3D" id="3.40.50.9100">
    <property type="entry name" value="Dehydroquinase, class II"/>
    <property type="match status" value="1"/>
</dbReference>
<dbReference type="HAMAP" id="MF_00169">
    <property type="entry name" value="AroQ"/>
    <property type="match status" value="1"/>
</dbReference>
<dbReference type="InterPro" id="IPR001874">
    <property type="entry name" value="DHquinase_II"/>
</dbReference>
<dbReference type="InterPro" id="IPR018509">
    <property type="entry name" value="DHquinase_II_CS"/>
</dbReference>
<dbReference type="InterPro" id="IPR036441">
    <property type="entry name" value="DHquinase_II_sf"/>
</dbReference>
<dbReference type="NCBIfam" id="TIGR01088">
    <property type="entry name" value="aroQ"/>
    <property type="match status" value="1"/>
</dbReference>
<dbReference type="NCBIfam" id="NF003805">
    <property type="entry name" value="PRK05395.1-2"/>
    <property type="match status" value="1"/>
</dbReference>
<dbReference type="NCBIfam" id="NF003806">
    <property type="entry name" value="PRK05395.1-3"/>
    <property type="match status" value="1"/>
</dbReference>
<dbReference type="NCBIfam" id="NF003807">
    <property type="entry name" value="PRK05395.1-4"/>
    <property type="match status" value="1"/>
</dbReference>
<dbReference type="PANTHER" id="PTHR21272">
    <property type="entry name" value="CATABOLIC 3-DEHYDROQUINASE"/>
    <property type="match status" value="1"/>
</dbReference>
<dbReference type="PANTHER" id="PTHR21272:SF3">
    <property type="entry name" value="CATABOLIC 3-DEHYDROQUINASE"/>
    <property type="match status" value="1"/>
</dbReference>
<dbReference type="Pfam" id="PF01220">
    <property type="entry name" value="DHquinase_II"/>
    <property type="match status" value="1"/>
</dbReference>
<dbReference type="PIRSF" id="PIRSF001399">
    <property type="entry name" value="DHquinase_II"/>
    <property type="match status" value="1"/>
</dbReference>
<dbReference type="SUPFAM" id="SSF52304">
    <property type="entry name" value="Type II 3-dehydroquinate dehydratase"/>
    <property type="match status" value="1"/>
</dbReference>
<dbReference type="PROSITE" id="PS01029">
    <property type="entry name" value="DEHYDROQUINASE_II"/>
    <property type="match status" value="1"/>
</dbReference>
<evidence type="ECO:0000255" key="1">
    <source>
        <dbReference type="HAMAP-Rule" id="MF_00169"/>
    </source>
</evidence>
<gene>
    <name evidence="1" type="primary">aroQ</name>
    <name type="ordered locus">BLi02618</name>
    <name type="ordered locus">BL01544</name>
</gene>
<accession>Q65HH2</accession>
<accession>Q62SX6</accession>
<reference key="1">
    <citation type="journal article" date="2004" name="J. Mol. Microbiol. Biotechnol.">
        <title>The complete genome sequence of Bacillus licheniformis DSM13, an organism with great industrial potential.</title>
        <authorList>
            <person name="Veith B."/>
            <person name="Herzberg C."/>
            <person name="Steckel S."/>
            <person name="Feesche J."/>
            <person name="Maurer K.H."/>
            <person name="Ehrenreich P."/>
            <person name="Baeumer S."/>
            <person name="Henne A."/>
            <person name="Liesegang H."/>
            <person name="Merkl R."/>
            <person name="Ehrenreich A."/>
            <person name="Gottschalk G."/>
        </authorList>
    </citation>
    <scope>NUCLEOTIDE SEQUENCE [LARGE SCALE GENOMIC DNA]</scope>
    <source>
        <strain>ATCC 14580 / DSM 13 / JCM 2505 / CCUG 7422 / NBRC 12200 / NCIMB 9375 / NCTC 10341 / NRRL NRS-1264 / Gibson 46</strain>
    </source>
</reference>
<reference key="2">
    <citation type="journal article" date="2004" name="Genome Biol.">
        <title>Complete genome sequence of the industrial bacterium Bacillus licheniformis and comparisons with closely related Bacillus species.</title>
        <authorList>
            <person name="Rey M.W."/>
            <person name="Ramaiya P."/>
            <person name="Nelson B.A."/>
            <person name="Brody-Karpin S.D."/>
            <person name="Zaretsky E.J."/>
            <person name="Tang M."/>
            <person name="Lopez de Leon A."/>
            <person name="Xiang H."/>
            <person name="Gusti V."/>
            <person name="Clausen I.G."/>
            <person name="Olsen P.B."/>
            <person name="Rasmussen M.D."/>
            <person name="Andersen J.T."/>
            <person name="Joergensen P.L."/>
            <person name="Larsen T.S."/>
            <person name="Sorokin A."/>
            <person name="Bolotin A."/>
            <person name="Lapidus A."/>
            <person name="Galleron N."/>
            <person name="Ehrlich S.D."/>
            <person name="Berka R.M."/>
        </authorList>
    </citation>
    <scope>NUCLEOTIDE SEQUENCE [LARGE SCALE GENOMIC DNA]</scope>
    <source>
        <strain>ATCC 14580 / DSM 13 / JCM 2505 / CCUG 7422 / NBRC 12200 / NCIMB 9375 / NCTC 10341 / NRRL NRS-1264 / Gibson 46</strain>
    </source>
</reference>
<feature type="chain" id="PRO_1000023451" description="3-dehydroquinate dehydratase">
    <location>
        <begin position="1"/>
        <end position="145"/>
    </location>
</feature>
<feature type="active site" description="Proton acceptor" evidence="1">
    <location>
        <position position="23"/>
    </location>
</feature>
<feature type="active site" description="Proton donor" evidence="1">
    <location>
        <position position="100"/>
    </location>
</feature>
<feature type="binding site" evidence="1">
    <location>
        <position position="74"/>
    </location>
    <ligand>
        <name>substrate</name>
    </ligand>
</feature>
<feature type="binding site" evidence="1">
    <location>
        <position position="80"/>
    </location>
    <ligand>
        <name>substrate</name>
    </ligand>
</feature>
<feature type="binding site" evidence="1">
    <location>
        <position position="87"/>
    </location>
    <ligand>
        <name>substrate</name>
    </ligand>
</feature>
<feature type="binding site" evidence="1">
    <location>
        <begin position="101"/>
        <end position="102"/>
    </location>
    <ligand>
        <name>substrate</name>
    </ligand>
</feature>
<feature type="binding site" evidence="1">
    <location>
        <position position="111"/>
    </location>
    <ligand>
        <name>substrate</name>
    </ligand>
</feature>
<feature type="site" description="Transition state stabilizer" evidence="1">
    <location>
        <position position="18"/>
    </location>
</feature>
<name>AROQ_BACLD</name>
<sequence>MPHILILNGPNLNRLGKREPDVYGTDTLTDLEQRLFQFAEGIQTELTFFQSNHEGDLIDALHEAEEQYDGIVLNPGAFSHYSYALRDAVAAISIPVIEVHLSNPHAREEFRHRSVIAPVARGQITGLGFEGYKLAISYFMNTNNK</sequence>
<organism>
    <name type="scientific">Bacillus licheniformis (strain ATCC 14580 / DSM 13 / JCM 2505 / CCUG 7422 / NBRC 12200 / NCIMB 9375 / NCTC 10341 / NRRL NRS-1264 / Gibson 46)</name>
    <dbReference type="NCBI Taxonomy" id="279010"/>
    <lineage>
        <taxon>Bacteria</taxon>
        <taxon>Bacillati</taxon>
        <taxon>Bacillota</taxon>
        <taxon>Bacilli</taxon>
        <taxon>Bacillales</taxon>
        <taxon>Bacillaceae</taxon>
        <taxon>Bacillus</taxon>
    </lineage>
</organism>